<feature type="signal peptide" evidence="3">
    <location>
        <begin position="1"/>
        <end position="17"/>
    </location>
</feature>
<feature type="chain" id="PRO_5004199730" description="Aspartic protease 4" evidence="3">
    <location>
        <begin position="18"/>
        <end position="444"/>
    </location>
</feature>
<feature type="domain" description="Peptidase A1" evidence="5">
    <location>
        <begin position="94"/>
        <end position="410"/>
    </location>
</feature>
<feature type="region of interest" description="Disordered" evidence="7">
    <location>
        <begin position="413"/>
        <end position="444"/>
    </location>
</feature>
<feature type="compositionally biased region" description="Acidic residues" evidence="7">
    <location>
        <begin position="433"/>
        <end position="444"/>
    </location>
</feature>
<feature type="active site" evidence="5">
    <location>
        <position position="112"/>
    </location>
</feature>
<feature type="active site" evidence="5">
    <location>
        <position position="298"/>
    </location>
</feature>
<feature type="glycosylation site" description="N-linked (GlcNAc...) asparagine" evidence="4">
    <location>
        <position position="106"/>
    </location>
</feature>
<feature type="glycosylation site" description="N-linked (GlcNAc...) asparagine" evidence="4">
    <location>
        <position position="433"/>
    </location>
</feature>
<feature type="disulfide bond" evidence="1">
    <location>
        <begin position="125"/>
        <end position="132"/>
    </location>
</feature>
<feature type="disulfide bond" evidence="1">
    <location>
        <begin position="289"/>
        <end position="293"/>
    </location>
</feature>
<feature type="disulfide bond" evidence="5">
    <location>
        <begin position="332"/>
        <end position="369"/>
    </location>
</feature>
<reference evidence="12" key="1">
    <citation type="journal article" date="1998" name="Science">
        <title>Genome sequence of the nematode C. elegans: a platform for investigating biology.</title>
        <authorList>
            <consortium name="The C. elegans sequencing consortium"/>
        </authorList>
    </citation>
    <scope>NUCLEOTIDE SEQUENCE [LARGE SCALE GENOMIC DNA]</scope>
    <source>
        <strain evidence="12">Bristol N2</strain>
    </source>
</reference>
<reference evidence="11" key="2">
    <citation type="journal article" date="2002" name="Nature">
        <title>Specific aspartyl and calpain proteases are required for neurodegeneration in C. elegans.</title>
        <authorList>
            <person name="Syntichaki P."/>
            <person name="Xu K."/>
            <person name="Driscoll M."/>
            <person name="Tavernarakis N."/>
        </authorList>
    </citation>
    <scope>FUNCTION</scope>
    <scope>SUBCELLULAR LOCATION</scope>
    <scope>TISSUE SPECIFICITY</scope>
    <scope>DISRUPTION PHENOTYPE</scope>
</reference>
<reference evidence="11" key="3">
    <citation type="journal article" date="2016" name="Front. Microbiol.">
        <title>A Disease Model of Muscle Necrosis Caused by Aeromonas dhakensis Infection in Caenorhabditis elegans.</title>
        <authorList>
            <person name="Chen P.L."/>
            <person name="Chen Y.W."/>
            <person name="Ou C.C."/>
            <person name="Lee T.M."/>
            <person name="Wu C.J."/>
            <person name="Ko W.C."/>
            <person name="Chen C.S."/>
        </authorList>
    </citation>
    <scope>DISRUPTION PHENOTYPE</scope>
</reference>
<reference evidence="11" key="4">
    <citation type="journal article" date="2016" name="PLoS Pathog.">
        <title>Bacillus thuringiensis Crystal Protein Cry6Aa Triggers Caenorhabditis elegans Necrosis Pathway Mediated by Aspartic Protease (ASP-1).</title>
        <authorList>
            <person name="Zhang F."/>
            <person name="Peng D."/>
            <person name="Cheng C."/>
            <person name="Zhou W."/>
            <person name="Ju S."/>
            <person name="Wan D."/>
            <person name="Yu Z."/>
            <person name="Shi J."/>
            <person name="Deng Y."/>
            <person name="Wang F."/>
            <person name="Ye X."/>
            <person name="Hu Z."/>
            <person name="Lin J."/>
            <person name="Ruan L."/>
            <person name="Sun M."/>
        </authorList>
    </citation>
    <scope>FUNCTION</scope>
</reference>
<proteinExistence type="evidence at transcript level"/>
<accession>Q21966</accession>
<keyword id="KW-0064">Aspartyl protease</keyword>
<keyword id="KW-0963">Cytoplasm</keyword>
<keyword id="KW-1015">Disulfide bond</keyword>
<keyword id="KW-0325">Glycoprotein</keyword>
<keyword id="KW-0378">Hydrolase</keyword>
<keyword id="KW-0458">Lysosome</keyword>
<keyword id="KW-1210">Necrosis</keyword>
<keyword id="KW-0645">Protease</keyword>
<keyword id="KW-1185">Reference proteome</keyword>
<keyword id="KW-0964">Secreted</keyword>
<keyword id="KW-0732">Signal</keyword>
<name>ASP4_CAEEL</name>
<organism evidence="12">
    <name type="scientific">Caenorhabditis elegans</name>
    <dbReference type="NCBI Taxonomy" id="6239"/>
    <lineage>
        <taxon>Eukaryota</taxon>
        <taxon>Metazoa</taxon>
        <taxon>Ecdysozoa</taxon>
        <taxon>Nematoda</taxon>
        <taxon>Chromadorea</taxon>
        <taxon>Rhabditida</taxon>
        <taxon>Rhabditina</taxon>
        <taxon>Rhabditomorpha</taxon>
        <taxon>Rhabditoidea</taxon>
        <taxon>Rhabditidae</taxon>
        <taxon>Peloderinae</taxon>
        <taxon>Caenorhabditis</taxon>
    </lineage>
</organism>
<evidence type="ECO:0000250" key="1">
    <source>
        <dbReference type="UniProtKB" id="P0DJD7"/>
    </source>
</evidence>
<evidence type="ECO:0000250" key="2">
    <source>
        <dbReference type="UniProtKB" id="Q9N9H4"/>
    </source>
</evidence>
<evidence type="ECO:0000255" key="3"/>
<evidence type="ECO:0000255" key="4">
    <source>
        <dbReference type="PROSITE-ProRule" id="PRU00498"/>
    </source>
</evidence>
<evidence type="ECO:0000255" key="5">
    <source>
        <dbReference type="PROSITE-ProRule" id="PRU01103"/>
    </source>
</evidence>
<evidence type="ECO:0000255" key="6">
    <source>
        <dbReference type="RuleBase" id="RU000454"/>
    </source>
</evidence>
<evidence type="ECO:0000256" key="7">
    <source>
        <dbReference type="SAM" id="MobiDB-lite"/>
    </source>
</evidence>
<evidence type="ECO:0000269" key="8">
    <source>
    </source>
</evidence>
<evidence type="ECO:0000269" key="9">
    <source>
    </source>
</evidence>
<evidence type="ECO:0000269" key="10">
    <source>
    </source>
</evidence>
<evidence type="ECO:0000305" key="11"/>
<evidence type="ECO:0000312" key="12">
    <source>
        <dbReference type="Proteomes" id="UP000001940"/>
    </source>
</evidence>
<evidence type="ECO:0000312" key="13">
    <source>
        <dbReference type="WormBase" id="R12H7.2"/>
    </source>
</evidence>
<gene>
    <name evidence="13" type="primary">asp-4</name>
    <name evidence="13" type="ORF">R12H7.2</name>
</gene>
<dbReference type="EC" id="3.4.23.-" evidence="2"/>
<dbReference type="EMBL" id="BX284606">
    <property type="protein sequence ID" value="CAA90633.1"/>
    <property type="molecule type" value="Genomic_DNA"/>
</dbReference>
<dbReference type="PIR" id="T24204">
    <property type="entry name" value="T24204"/>
</dbReference>
<dbReference type="RefSeq" id="NP_510191.1">
    <property type="nucleotide sequence ID" value="NM_077790.8"/>
</dbReference>
<dbReference type="SMR" id="Q21966"/>
<dbReference type="FunCoup" id="Q21966">
    <property type="interactions" value="1157"/>
</dbReference>
<dbReference type="STRING" id="6239.R12H7.2.1"/>
<dbReference type="MEROPS" id="A01.068"/>
<dbReference type="GlyCosmos" id="Q21966">
    <property type="glycosylation" value="2 sites, No reported glycans"/>
</dbReference>
<dbReference type="PaxDb" id="6239-R12H7.2"/>
<dbReference type="PeptideAtlas" id="Q21966"/>
<dbReference type="EnsemblMetazoa" id="R12H7.2.1">
    <property type="protein sequence ID" value="R12H7.2.1"/>
    <property type="gene ID" value="WBGene00000217"/>
</dbReference>
<dbReference type="GeneID" id="181444"/>
<dbReference type="KEGG" id="cel:CELE_R12H7.2"/>
<dbReference type="UCSC" id="R12H7.2">
    <property type="organism name" value="c. elegans"/>
</dbReference>
<dbReference type="AGR" id="WB:WBGene00000217"/>
<dbReference type="CTD" id="181444"/>
<dbReference type="WormBase" id="R12H7.2">
    <property type="protein sequence ID" value="CE03567"/>
    <property type="gene ID" value="WBGene00000217"/>
    <property type="gene designation" value="asp-4"/>
</dbReference>
<dbReference type="eggNOG" id="KOG1339">
    <property type="taxonomic scope" value="Eukaryota"/>
</dbReference>
<dbReference type="GeneTree" id="ENSGT00940000155733"/>
<dbReference type="HOGENOM" id="CLU_013253_3_0_1"/>
<dbReference type="InParanoid" id="Q21966"/>
<dbReference type="OMA" id="KGEYMIS"/>
<dbReference type="OrthoDB" id="771136at2759"/>
<dbReference type="PhylomeDB" id="Q21966"/>
<dbReference type="Reactome" id="R-CEL-2022377">
    <property type="pathway name" value="Metabolism of Angiotensinogen to Angiotensins"/>
</dbReference>
<dbReference type="Reactome" id="R-CEL-5683826">
    <property type="pathway name" value="Surfactant metabolism"/>
</dbReference>
<dbReference type="PRO" id="PR:Q21966"/>
<dbReference type="Proteomes" id="UP000001940">
    <property type="component" value="Chromosome X"/>
</dbReference>
<dbReference type="Bgee" id="WBGene00000217">
    <property type="expression patterns" value="Expressed in adult organism and 4 other cell types or tissues"/>
</dbReference>
<dbReference type="GO" id="GO:0005737">
    <property type="term" value="C:cytoplasm"/>
    <property type="evidence" value="ECO:0000314"/>
    <property type="project" value="WormBase"/>
</dbReference>
<dbReference type="GO" id="GO:0005576">
    <property type="term" value="C:extracellular region"/>
    <property type="evidence" value="ECO:0007669"/>
    <property type="project" value="UniProtKB-SubCell"/>
</dbReference>
<dbReference type="GO" id="GO:0005764">
    <property type="term" value="C:lysosome"/>
    <property type="evidence" value="ECO:0000314"/>
    <property type="project" value="WormBase"/>
</dbReference>
<dbReference type="GO" id="GO:0004190">
    <property type="term" value="F:aspartic-type endopeptidase activity"/>
    <property type="evidence" value="ECO:0000250"/>
    <property type="project" value="WormBase"/>
</dbReference>
<dbReference type="GO" id="GO:0006915">
    <property type="term" value="P:apoptotic process"/>
    <property type="evidence" value="ECO:0000318"/>
    <property type="project" value="GO_Central"/>
</dbReference>
<dbReference type="GO" id="GO:0097300">
    <property type="term" value="P:programmed necrotic cell death"/>
    <property type="evidence" value="ECO:0000316"/>
    <property type="project" value="WormBase"/>
</dbReference>
<dbReference type="GO" id="GO:0006508">
    <property type="term" value="P:proteolysis"/>
    <property type="evidence" value="ECO:0000318"/>
    <property type="project" value="GO_Central"/>
</dbReference>
<dbReference type="FunFam" id="2.40.70.10:FF:000009">
    <property type="entry name" value="Aspartic proteinase A1"/>
    <property type="match status" value="1"/>
</dbReference>
<dbReference type="FunFam" id="2.40.70.10:FF:000044">
    <property type="entry name" value="Lysosomal aspartic protease"/>
    <property type="match status" value="1"/>
</dbReference>
<dbReference type="Gene3D" id="2.60.40.1960">
    <property type="match status" value="1"/>
</dbReference>
<dbReference type="Gene3D" id="2.40.70.10">
    <property type="entry name" value="Acid Proteases"/>
    <property type="match status" value="2"/>
</dbReference>
<dbReference type="InterPro" id="IPR001461">
    <property type="entry name" value="Aspartic_peptidase_A1"/>
</dbReference>
<dbReference type="InterPro" id="IPR001969">
    <property type="entry name" value="Aspartic_peptidase_AS"/>
</dbReference>
<dbReference type="InterPro" id="IPR033121">
    <property type="entry name" value="PEPTIDASE_A1"/>
</dbReference>
<dbReference type="InterPro" id="IPR021109">
    <property type="entry name" value="Peptidase_aspartic_dom_sf"/>
</dbReference>
<dbReference type="PANTHER" id="PTHR47966">
    <property type="entry name" value="BETA-SITE APP-CLEAVING ENZYME, ISOFORM A-RELATED"/>
    <property type="match status" value="1"/>
</dbReference>
<dbReference type="PANTHER" id="PTHR47966:SF51">
    <property type="entry name" value="BETA-SITE APP-CLEAVING ENZYME, ISOFORM A-RELATED"/>
    <property type="match status" value="1"/>
</dbReference>
<dbReference type="Pfam" id="PF00026">
    <property type="entry name" value="Asp"/>
    <property type="match status" value="1"/>
</dbReference>
<dbReference type="PRINTS" id="PR00792">
    <property type="entry name" value="PEPSIN"/>
</dbReference>
<dbReference type="SUPFAM" id="SSF50630">
    <property type="entry name" value="Acid proteases"/>
    <property type="match status" value="1"/>
</dbReference>
<dbReference type="PROSITE" id="PS00141">
    <property type="entry name" value="ASP_PROTEASE"/>
    <property type="match status" value="2"/>
</dbReference>
<dbReference type="PROSITE" id="PS51767">
    <property type="entry name" value="PEPTIDASE_A1"/>
    <property type="match status" value="1"/>
</dbReference>
<protein>
    <recommendedName>
        <fullName evidence="13">Aspartic protease 4</fullName>
        <ecNumber evidence="2">3.4.23.-</ecNumber>
    </recommendedName>
</protein>
<sequence>MNRCILLLLGALLLVQGLHVHKRQQKLRTVSLKKQPTLRETLLQAGSFETFAKHRHGYKKYLKTNGNHHFDKYQALNVEGEIDELLRNYMDAQYFGTISIGTPAQNFTVIFDTGSSNLWIPSKKCPFYDIACMLHHRYDSKSSSTYKEDGRKMAIQYGTGSMKGFISKDSVCVAGVCAEDQPFAEATSEPGITFVAAKFDGILGMAYPEIAVLGVQPVFNTLFEQKKVPSNLFSFWLNRNPDSEIGGEITFGGIDSRRYVEPITYVPVTRKGYWQFKMDKVVGSGVLGCSNGCQAIADTGTSLIAGPKAQIEAIQNFIGAEPLIKGEYMISCDKVPTLPPVSFVIGGQEFSLKGEDYVLKVSQGGKTICLSGFMGIDLPERVGELWILGDVFIGRYYSVFDFDQNRVGFAQAKTADGRPVDPAPRPFRSVFDNESEESMEQDDE</sequence>
<comment type="function">
    <text evidence="8 9">Aspartic protease, which is part of the necrosis cell death pathway (PubMed:12410314). Involved in neuronal cell degeneration (PubMed:12410314). Involved in heat stress response (PubMed:26795495).</text>
</comment>
<comment type="subcellular location">
    <subcellularLocation>
        <location evidence="8">Cytoplasm</location>
    </subcellularLocation>
    <subcellularLocation>
        <location evidence="8">Lysosome</location>
    </subcellularLocation>
    <subcellularLocation>
        <location evidence="11">Secreted</location>
    </subcellularLocation>
</comment>
<comment type="tissue specificity">
    <text evidence="8">Highly expressed in intestine and to a lower extent in body wall muscles, hypodermis and neurons.</text>
</comment>
<comment type="disruption phenotype">
    <text evidence="8 10">RNAi-mediated knockdown prevents muscle degeneration caused by bacterium A.dhakensis-mediated infection (PubMed:28101079). RNAi-mediated knockdown prevents neuronal degeneration in a mec-4(u231), deg-1(u38) or gsa-1(Q227L) gain-of-function mutant background (PubMed:12410314).</text>
</comment>
<comment type="similarity">
    <text evidence="3 5 6">Belongs to the peptidase A1 family.</text>
</comment>